<dbReference type="EC" id="6.3.5.-" evidence="1"/>
<dbReference type="EMBL" id="CP001344">
    <property type="protein sequence ID" value="ACL42942.1"/>
    <property type="molecule type" value="Genomic_DNA"/>
</dbReference>
<dbReference type="SMR" id="B8HU22"/>
<dbReference type="STRING" id="395961.Cyan7425_0551"/>
<dbReference type="KEGG" id="cyn:Cyan7425_0551"/>
<dbReference type="eggNOG" id="COG0721">
    <property type="taxonomic scope" value="Bacteria"/>
</dbReference>
<dbReference type="HOGENOM" id="CLU_105899_2_0_3"/>
<dbReference type="OrthoDB" id="9813938at2"/>
<dbReference type="GO" id="GO:0050566">
    <property type="term" value="F:asparaginyl-tRNA synthase (glutamine-hydrolyzing) activity"/>
    <property type="evidence" value="ECO:0007669"/>
    <property type="project" value="RHEA"/>
</dbReference>
<dbReference type="GO" id="GO:0005524">
    <property type="term" value="F:ATP binding"/>
    <property type="evidence" value="ECO:0007669"/>
    <property type="project" value="UniProtKB-KW"/>
</dbReference>
<dbReference type="GO" id="GO:0050567">
    <property type="term" value="F:glutaminyl-tRNA synthase (glutamine-hydrolyzing) activity"/>
    <property type="evidence" value="ECO:0007669"/>
    <property type="project" value="UniProtKB-UniRule"/>
</dbReference>
<dbReference type="GO" id="GO:0070681">
    <property type="term" value="P:glutaminyl-tRNAGln biosynthesis via transamidation"/>
    <property type="evidence" value="ECO:0007669"/>
    <property type="project" value="TreeGrafter"/>
</dbReference>
<dbReference type="GO" id="GO:0006450">
    <property type="term" value="P:regulation of translational fidelity"/>
    <property type="evidence" value="ECO:0007669"/>
    <property type="project" value="InterPro"/>
</dbReference>
<dbReference type="GO" id="GO:0006412">
    <property type="term" value="P:translation"/>
    <property type="evidence" value="ECO:0007669"/>
    <property type="project" value="UniProtKB-UniRule"/>
</dbReference>
<dbReference type="Gene3D" id="1.10.20.60">
    <property type="entry name" value="Glu-tRNAGln amidotransferase C subunit, N-terminal domain"/>
    <property type="match status" value="1"/>
</dbReference>
<dbReference type="HAMAP" id="MF_00122">
    <property type="entry name" value="GatC"/>
    <property type="match status" value="1"/>
</dbReference>
<dbReference type="InterPro" id="IPR036113">
    <property type="entry name" value="Asp/Glu-ADT_sf_sub_c"/>
</dbReference>
<dbReference type="InterPro" id="IPR003837">
    <property type="entry name" value="GatC"/>
</dbReference>
<dbReference type="NCBIfam" id="TIGR00135">
    <property type="entry name" value="gatC"/>
    <property type="match status" value="1"/>
</dbReference>
<dbReference type="PANTHER" id="PTHR15004">
    <property type="entry name" value="GLUTAMYL-TRNA(GLN) AMIDOTRANSFERASE SUBUNIT C, MITOCHONDRIAL"/>
    <property type="match status" value="1"/>
</dbReference>
<dbReference type="PANTHER" id="PTHR15004:SF0">
    <property type="entry name" value="GLUTAMYL-TRNA(GLN) AMIDOTRANSFERASE SUBUNIT C, MITOCHONDRIAL"/>
    <property type="match status" value="1"/>
</dbReference>
<dbReference type="Pfam" id="PF02686">
    <property type="entry name" value="GatC"/>
    <property type="match status" value="1"/>
</dbReference>
<dbReference type="SUPFAM" id="SSF141000">
    <property type="entry name" value="Glu-tRNAGln amidotransferase C subunit"/>
    <property type="match status" value="1"/>
</dbReference>
<feature type="chain" id="PRO_1000122563" description="Aspartyl/glutamyl-tRNA(Asn/Gln) amidotransferase subunit C">
    <location>
        <begin position="1"/>
        <end position="97"/>
    </location>
</feature>
<reference key="1">
    <citation type="journal article" date="2011" name="MBio">
        <title>Novel metabolic attributes of the genus Cyanothece, comprising a group of unicellular nitrogen-fixing Cyanobacteria.</title>
        <authorList>
            <person name="Bandyopadhyay A."/>
            <person name="Elvitigala T."/>
            <person name="Welsh E."/>
            <person name="Stockel J."/>
            <person name="Liberton M."/>
            <person name="Min H."/>
            <person name="Sherman L.A."/>
            <person name="Pakrasi H.B."/>
        </authorList>
    </citation>
    <scope>NUCLEOTIDE SEQUENCE [LARGE SCALE GENOMIC DNA]</scope>
    <source>
        <strain>PCC 7425 / ATCC 29141</strain>
    </source>
</reference>
<proteinExistence type="inferred from homology"/>
<evidence type="ECO:0000255" key="1">
    <source>
        <dbReference type="HAMAP-Rule" id="MF_00122"/>
    </source>
</evidence>
<sequence length="97" mass="11007">MLNEEQVKKVAHLARLELSGEEVAQFTTQLGSILDYFQQLEELNVTDVPPTTRAIESSNITRADQLHPWAERENILAIAPEQDGDFFRVPKIISTED</sequence>
<accession>B8HU22</accession>
<protein>
    <recommendedName>
        <fullName evidence="1">Aspartyl/glutamyl-tRNA(Asn/Gln) amidotransferase subunit C</fullName>
        <shortName evidence="1">Asp/Glu-ADT subunit C</shortName>
        <ecNumber evidence="1">6.3.5.-</ecNumber>
    </recommendedName>
</protein>
<comment type="function">
    <text evidence="1">Allows the formation of correctly charged Asn-tRNA(Asn) or Gln-tRNA(Gln) through the transamidation of misacylated Asp-tRNA(Asn) or Glu-tRNA(Gln) in organisms which lack either or both of asparaginyl-tRNA or glutaminyl-tRNA synthetases. The reaction takes place in the presence of glutamine and ATP through an activated phospho-Asp-tRNA(Asn) or phospho-Glu-tRNA(Gln).</text>
</comment>
<comment type="catalytic activity">
    <reaction evidence="1">
        <text>L-glutamyl-tRNA(Gln) + L-glutamine + ATP + H2O = L-glutaminyl-tRNA(Gln) + L-glutamate + ADP + phosphate + H(+)</text>
        <dbReference type="Rhea" id="RHEA:17521"/>
        <dbReference type="Rhea" id="RHEA-COMP:9681"/>
        <dbReference type="Rhea" id="RHEA-COMP:9684"/>
        <dbReference type="ChEBI" id="CHEBI:15377"/>
        <dbReference type="ChEBI" id="CHEBI:15378"/>
        <dbReference type="ChEBI" id="CHEBI:29985"/>
        <dbReference type="ChEBI" id="CHEBI:30616"/>
        <dbReference type="ChEBI" id="CHEBI:43474"/>
        <dbReference type="ChEBI" id="CHEBI:58359"/>
        <dbReference type="ChEBI" id="CHEBI:78520"/>
        <dbReference type="ChEBI" id="CHEBI:78521"/>
        <dbReference type="ChEBI" id="CHEBI:456216"/>
    </reaction>
</comment>
<comment type="catalytic activity">
    <reaction evidence="1">
        <text>L-aspartyl-tRNA(Asn) + L-glutamine + ATP + H2O = L-asparaginyl-tRNA(Asn) + L-glutamate + ADP + phosphate + 2 H(+)</text>
        <dbReference type="Rhea" id="RHEA:14513"/>
        <dbReference type="Rhea" id="RHEA-COMP:9674"/>
        <dbReference type="Rhea" id="RHEA-COMP:9677"/>
        <dbReference type="ChEBI" id="CHEBI:15377"/>
        <dbReference type="ChEBI" id="CHEBI:15378"/>
        <dbReference type="ChEBI" id="CHEBI:29985"/>
        <dbReference type="ChEBI" id="CHEBI:30616"/>
        <dbReference type="ChEBI" id="CHEBI:43474"/>
        <dbReference type="ChEBI" id="CHEBI:58359"/>
        <dbReference type="ChEBI" id="CHEBI:78515"/>
        <dbReference type="ChEBI" id="CHEBI:78516"/>
        <dbReference type="ChEBI" id="CHEBI:456216"/>
    </reaction>
</comment>
<comment type="subunit">
    <text evidence="1">Heterotrimer of A, B and C subunits.</text>
</comment>
<comment type="similarity">
    <text evidence="1">Belongs to the GatC family.</text>
</comment>
<name>GATC_CYAP4</name>
<keyword id="KW-0067">ATP-binding</keyword>
<keyword id="KW-0436">Ligase</keyword>
<keyword id="KW-0547">Nucleotide-binding</keyword>
<keyword id="KW-0648">Protein biosynthesis</keyword>
<organism>
    <name type="scientific">Cyanothece sp. (strain PCC 7425 / ATCC 29141)</name>
    <dbReference type="NCBI Taxonomy" id="395961"/>
    <lineage>
        <taxon>Bacteria</taxon>
        <taxon>Bacillati</taxon>
        <taxon>Cyanobacteriota</taxon>
        <taxon>Cyanophyceae</taxon>
        <taxon>Gomontiellales</taxon>
        <taxon>Cyanothecaceae</taxon>
        <taxon>Cyanothece</taxon>
    </lineage>
</organism>
<gene>
    <name evidence="1" type="primary">gatC</name>
    <name type="ordered locus">Cyan7425_0551</name>
</gene>